<reference key="1">
    <citation type="journal article" date="2002" name="Nature">
        <title>The genome sequence of Schizosaccharomyces pombe.</title>
        <authorList>
            <person name="Wood V."/>
            <person name="Gwilliam R."/>
            <person name="Rajandream M.A."/>
            <person name="Lyne M.H."/>
            <person name="Lyne R."/>
            <person name="Stewart A."/>
            <person name="Sgouros J.G."/>
            <person name="Peat N."/>
            <person name="Hayles J."/>
            <person name="Baker S.G."/>
            <person name="Basham D."/>
            <person name="Bowman S."/>
            <person name="Brooks K."/>
            <person name="Brown D."/>
            <person name="Brown S."/>
            <person name="Chillingworth T."/>
            <person name="Churcher C.M."/>
            <person name="Collins M."/>
            <person name="Connor R."/>
            <person name="Cronin A."/>
            <person name="Davis P."/>
            <person name="Feltwell T."/>
            <person name="Fraser A."/>
            <person name="Gentles S."/>
            <person name="Goble A."/>
            <person name="Hamlin N."/>
            <person name="Harris D.E."/>
            <person name="Hidalgo J."/>
            <person name="Hodgson G."/>
            <person name="Holroyd S."/>
            <person name="Hornsby T."/>
            <person name="Howarth S."/>
            <person name="Huckle E.J."/>
            <person name="Hunt S."/>
            <person name="Jagels K."/>
            <person name="James K.D."/>
            <person name="Jones L."/>
            <person name="Jones M."/>
            <person name="Leather S."/>
            <person name="McDonald S."/>
            <person name="McLean J."/>
            <person name="Mooney P."/>
            <person name="Moule S."/>
            <person name="Mungall K.L."/>
            <person name="Murphy L.D."/>
            <person name="Niblett D."/>
            <person name="Odell C."/>
            <person name="Oliver K."/>
            <person name="O'Neil S."/>
            <person name="Pearson D."/>
            <person name="Quail M.A."/>
            <person name="Rabbinowitsch E."/>
            <person name="Rutherford K.M."/>
            <person name="Rutter S."/>
            <person name="Saunders D."/>
            <person name="Seeger K."/>
            <person name="Sharp S."/>
            <person name="Skelton J."/>
            <person name="Simmonds M.N."/>
            <person name="Squares R."/>
            <person name="Squares S."/>
            <person name="Stevens K."/>
            <person name="Taylor K."/>
            <person name="Taylor R.G."/>
            <person name="Tivey A."/>
            <person name="Walsh S.V."/>
            <person name="Warren T."/>
            <person name="Whitehead S."/>
            <person name="Woodward J.R."/>
            <person name="Volckaert G."/>
            <person name="Aert R."/>
            <person name="Robben J."/>
            <person name="Grymonprez B."/>
            <person name="Weltjens I."/>
            <person name="Vanstreels E."/>
            <person name="Rieger M."/>
            <person name="Schaefer M."/>
            <person name="Mueller-Auer S."/>
            <person name="Gabel C."/>
            <person name="Fuchs M."/>
            <person name="Duesterhoeft A."/>
            <person name="Fritzc C."/>
            <person name="Holzer E."/>
            <person name="Moestl D."/>
            <person name="Hilbert H."/>
            <person name="Borzym K."/>
            <person name="Langer I."/>
            <person name="Beck A."/>
            <person name="Lehrach H."/>
            <person name="Reinhardt R."/>
            <person name="Pohl T.M."/>
            <person name="Eger P."/>
            <person name="Zimmermann W."/>
            <person name="Wedler H."/>
            <person name="Wambutt R."/>
            <person name="Purnelle B."/>
            <person name="Goffeau A."/>
            <person name="Cadieu E."/>
            <person name="Dreano S."/>
            <person name="Gloux S."/>
            <person name="Lelaure V."/>
            <person name="Mottier S."/>
            <person name="Galibert F."/>
            <person name="Aves S.J."/>
            <person name="Xiang Z."/>
            <person name="Hunt C."/>
            <person name="Moore K."/>
            <person name="Hurst S.M."/>
            <person name="Lucas M."/>
            <person name="Rochet M."/>
            <person name="Gaillardin C."/>
            <person name="Tallada V.A."/>
            <person name="Garzon A."/>
            <person name="Thode G."/>
            <person name="Daga R.R."/>
            <person name="Cruzado L."/>
            <person name="Jimenez J."/>
            <person name="Sanchez M."/>
            <person name="del Rey F."/>
            <person name="Benito J."/>
            <person name="Dominguez A."/>
            <person name="Revuelta J.L."/>
            <person name="Moreno S."/>
            <person name="Armstrong J."/>
            <person name="Forsburg S.L."/>
            <person name="Cerutti L."/>
            <person name="Lowe T."/>
            <person name="McCombie W.R."/>
            <person name="Paulsen I."/>
            <person name="Potashkin J."/>
            <person name="Shpakovski G.V."/>
            <person name="Ussery D."/>
            <person name="Barrell B.G."/>
            <person name="Nurse P."/>
        </authorList>
    </citation>
    <scope>NUCLEOTIDE SEQUENCE [LARGE SCALE GENOMIC DNA]</scope>
    <source>
        <strain>972 / ATCC 24843</strain>
    </source>
</reference>
<reference key="2">
    <citation type="journal article" date="2011" name="Science">
        <title>Comparative functional genomics of the fission yeasts.</title>
        <authorList>
            <person name="Rhind N."/>
            <person name="Chen Z."/>
            <person name="Yassour M."/>
            <person name="Thompson D.A."/>
            <person name="Haas B.J."/>
            <person name="Habib N."/>
            <person name="Wapinski I."/>
            <person name="Roy S."/>
            <person name="Lin M.F."/>
            <person name="Heiman D.I."/>
            <person name="Young S.K."/>
            <person name="Furuya K."/>
            <person name="Guo Y."/>
            <person name="Pidoux A."/>
            <person name="Chen H.M."/>
            <person name="Robbertse B."/>
            <person name="Goldberg J.M."/>
            <person name="Aoki K."/>
            <person name="Bayne E.H."/>
            <person name="Berlin A.M."/>
            <person name="Desjardins C.A."/>
            <person name="Dobbs E."/>
            <person name="Dukaj L."/>
            <person name="Fan L."/>
            <person name="FitzGerald M.G."/>
            <person name="French C."/>
            <person name="Gujja S."/>
            <person name="Hansen K."/>
            <person name="Keifenheim D."/>
            <person name="Levin J.Z."/>
            <person name="Mosher R.A."/>
            <person name="Mueller C.A."/>
            <person name="Pfiffner J."/>
            <person name="Priest M."/>
            <person name="Russ C."/>
            <person name="Smialowska A."/>
            <person name="Swoboda P."/>
            <person name="Sykes S.M."/>
            <person name="Vaughn M."/>
            <person name="Vengrova S."/>
            <person name="Yoder R."/>
            <person name="Zeng Q."/>
            <person name="Allshire R."/>
            <person name="Baulcombe D."/>
            <person name="Birren B.W."/>
            <person name="Brown W."/>
            <person name="Ekwall K."/>
            <person name="Kellis M."/>
            <person name="Leatherwood J."/>
            <person name="Levin H."/>
            <person name="Margalit H."/>
            <person name="Martienssen R."/>
            <person name="Nieduszynski C.A."/>
            <person name="Spatafora J.W."/>
            <person name="Friedman N."/>
            <person name="Dalgaard J.Z."/>
            <person name="Baumann P."/>
            <person name="Niki H."/>
            <person name="Regev A."/>
            <person name="Nusbaum C."/>
        </authorList>
    </citation>
    <scope>REVISION OF GENE MODEL</scope>
</reference>
<reference key="3">
    <citation type="journal article" date="2010" name="Cell Cycle">
        <title>High-throughput knockout screen in Schizosaccharomyces pombe identifies a novel gene required for efficient homolog disjunction during meiosis I.</title>
        <authorList>
            <person name="Rumpf C."/>
            <person name="Cipak L."/>
            <person name="Novatchkova M."/>
            <person name="Li Z."/>
            <person name="Polakova S."/>
            <person name="Dudas A."/>
            <person name="Kovacikova I."/>
            <person name="Miadokova E."/>
            <person name="Ammerer G."/>
            <person name="Gregan J."/>
        </authorList>
    </citation>
    <scope>REVISION OF GENE MODEL</scope>
    <scope>ACETYLATION</scope>
    <scope>IDENTIFICATION BY MASS SPECTROMETRY</scope>
    <scope>FUNCTION</scope>
    <scope>SUBCELLULAR LOCATION</scope>
    <scope>INTERACTION WITH RGA3; SEC10; SEC16; SYP1; RVB2; SPBC19C7.04C; SPBC2F12.05C AND SPAC3A11.10C</scope>
</reference>
<reference key="4">
    <citation type="journal article" date="2006" name="Nat. Biotechnol.">
        <title>ORFeome cloning and global analysis of protein localization in the fission yeast Schizosaccharomyces pombe.</title>
        <authorList>
            <person name="Matsuyama A."/>
            <person name="Arai R."/>
            <person name="Yashiroda Y."/>
            <person name="Shirai A."/>
            <person name="Kamata A."/>
            <person name="Sekido S."/>
            <person name="Kobayashi Y."/>
            <person name="Hashimoto A."/>
            <person name="Hamamoto M."/>
            <person name="Hiraoka Y."/>
            <person name="Horinouchi S."/>
            <person name="Yoshida M."/>
        </authorList>
    </citation>
    <scope>SUBCELLULAR LOCATION [LARGE SCALE ANALYSIS]</scope>
</reference>
<comment type="function">
    <text evidence="1 3">Component of the cytoplasmic dynein which acts as a motor for the intracellular retrograde motility of vesicles and organelles along microtubules (By similarity). Promotes oscillatory nuclear movement and efficient pairing of homologous centromeres during meiotic prophase.</text>
</comment>
<comment type="subunit">
    <text evidence="1 3">The dynein complex consists of at least two heavy chains and a number of intermediate and light chains (By similarity). Interacts with rga3, sec10, sec16, syp1, rvb2, spbc19c7.04c, spbc2f12.05 and spac3a11.10c.</text>
</comment>
<comment type="subcellular location">
    <subcellularLocation>
        <location evidence="2 3">Cytoplasm</location>
        <location evidence="2 3">Cytoskeleton</location>
    </subcellularLocation>
    <text>Localized to the leading edge of the horsetail nucleus, where the spindle pole body (SPB) is expected, and to the leading microtubules. In cycling cells, forms foci which distributed asymmetrically during cell division.</text>
</comment>
<comment type="PTM">
    <text evidence="3">The N-terminal part is acetylated.</text>
</comment>
<comment type="similarity">
    <text evidence="4">Belongs to the dynein light intermediate chain DYN3 family.</text>
</comment>
<accession>Q9P3W4</accession>
<feature type="chain" id="PRO_0000116845" description="Dynein intermediate light chain dil1">
    <location>
        <begin position="1"/>
        <end position="360"/>
    </location>
</feature>
<sequence length="360" mass="41078">MDELLEKLLNDLKKKEPKACSIICIGEDLDIIQCMNEHGCFSGGSYSELSNDCETVNFRGIAYKCFFTKDQVKVNFWQISHLTGGLFNFLVSQALNEHGLDLLWIIMVVAQTLSALVSFPEKLLNILRNMKTILINTEETVRNRFEESQNKKLVALLDKNSTTLDISSGILLNFTVVLKQLKHALGLHTSVDNSQEFILQFLRTTLLSVPTSSIVSISADPTSWNNLNVLMKYNFMFQKFKPRDFHAQTIQSETMFIPPCWDTISKIQSVNHEFNIALFKQTAKNFYDTLDISLLLGLFDKSISMLNCHSSKISDGDIPYKSHQVFLQELQNKYSEIKTYSSNKLNKSSIKSSLWKDLIQ</sequence>
<keyword id="KW-0007">Acetylation</keyword>
<keyword id="KW-0131">Cell cycle</keyword>
<keyword id="KW-0963">Cytoplasm</keyword>
<keyword id="KW-0206">Cytoskeleton</keyword>
<keyword id="KW-0243">Dynein</keyword>
<keyword id="KW-0469">Meiosis</keyword>
<keyword id="KW-0493">Microtubule</keyword>
<keyword id="KW-0505">Motor protein</keyword>
<keyword id="KW-1185">Reference proteome</keyword>
<dbReference type="EMBL" id="CU329670">
    <property type="protein sequence ID" value="CAB93846.2"/>
    <property type="molecule type" value="Genomic_DNA"/>
</dbReference>
<dbReference type="RefSeq" id="NP_594698.2">
    <property type="nucleotide sequence ID" value="NM_001020126.2"/>
</dbReference>
<dbReference type="BioGRID" id="280001">
    <property type="interactions" value="19"/>
</dbReference>
<dbReference type="FunCoup" id="Q9P3W4">
    <property type="interactions" value="2"/>
</dbReference>
<dbReference type="STRING" id="284812.Q9P3W4"/>
<dbReference type="PaxDb" id="4896-SPAC458.04c.1"/>
<dbReference type="EnsemblFungi" id="SPAC458.04c.1">
    <property type="protein sequence ID" value="SPAC458.04c.1:pep"/>
    <property type="gene ID" value="SPAC458.04c"/>
</dbReference>
<dbReference type="GeneID" id="2543586"/>
<dbReference type="KEGG" id="spo:2543586"/>
<dbReference type="PomBase" id="SPAC458.04c"/>
<dbReference type="VEuPathDB" id="FungiDB:SPAC458.04c"/>
<dbReference type="HOGENOM" id="CLU_674658_0_0_1"/>
<dbReference type="InParanoid" id="Q9P3W4"/>
<dbReference type="OMA" id="LIPPCWD"/>
<dbReference type="Reactome" id="R-SPO-6798695">
    <property type="pathway name" value="Neutrophil degranulation"/>
</dbReference>
<dbReference type="PRO" id="PR:Q9P3W4"/>
<dbReference type="Proteomes" id="UP000002485">
    <property type="component" value="Chromosome I"/>
</dbReference>
<dbReference type="GO" id="GO:0005938">
    <property type="term" value="C:cell cortex"/>
    <property type="evidence" value="ECO:0000314"/>
    <property type="project" value="PomBase"/>
</dbReference>
<dbReference type="GO" id="GO:0030981">
    <property type="term" value="C:cortical microtubule cytoskeleton"/>
    <property type="evidence" value="ECO:0000314"/>
    <property type="project" value="PomBase"/>
</dbReference>
<dbReference type="GO" id="GO:1903754">
    <property type="term" value="C:cortical microtubule plus-end"/>
    <property type="evidence" value="ECO:0000314"/>
    <property type="project" value="PomBase"/>
</dbReference>
<dbReference type="GO" id="GO:0005737">
    <property type="term" value="C:cytoplasm"/>
    <property type="evidence" value="ECO:0000314"/>
    <property type="project" value="PomBase"/>
</dbReference>
<dbReference type="GO" id="GO:0005868">
    <property type="term" value="C:cytoplasmic dynein complex"/>
    <property type="evidence" value="ECO:0000314"/>
    <property type="project" value="PomBase"/>
</dbReference>
<dbReference type="GO" id="GO:0005829">
    <property type="term" value="C:cytosol"/>
    <property type="evidence" value="ECO:0007005"/>
    <property type="project" value="PomBase"/>
</dbReference>
<dbReference type="GO" id="GO:0035974">
    <property type="term" value="C:meiotic spindle pole body"/>
    <property type="evidence" value="ECO:0000314"/>
    <property type="project" value="PomBase"/>
</dbReference>
<dbReference type="GO" id="GO:0015630">
    <property type="term" value="C:microtubule cytoskeleton"/>
    <property type="evidence" value="ECO:0000314"/>
    <property type="project" value="PomBase"/>
</dbReference>
<dbReference type="GO" id="GO:0110092">
    <property type="term" value="C:nucleus leading edge"/>
    <property type="evidence" value="ECO:0000314"/>
    <property type="project" value="PomBase"/>
</dbReference>
<dbReference type="GO" id="GO:0045504">
    <property type="term" value="F:dynein heavy chain binding"/>
    <property type="evidence" value="ECO:0000318"/>
    <property type="project" value="GO_Central"/>
</dbReference>
<dbReference type="GO" id="GO:0030989">
    <property type="term" value="P:dynein-driven meiotic oscillatory nuclear movement"/>
    <property type="evidence" value="ECO:0000315"/>
    <property type="project" value="PomBase"/>
</dbReference>
<dbReference type="GO" id="GO:0000226">
    <property type="term" value="P:microtubule cytoskeleton organization"/>
    <property type="evidence" value="ECO:0000318"/>
    <property type="project" value="GO_Central"/>
</dbReference>
<dbReference type="GO" id="GO:0007018">
    <property type="term" value="P:microtubule-based movement"/>
    <property type="evidence" value="ECO:0000318"/>
    <property type="project" value="GO_Central"/>
</dbReference>
<dbReference type="GO" id="GO:0000743">
    <property type="term" value="P:nuclear migration involved in conjugation with cellular fusion"/>
    <property type="evidence" value="ECO:0000315"/>
    <property type="project" value="PomBase"/>
</dbReference>
<dbReference type="InterPro" id="IPR008467">
    <property type="entry name" value="Dynein1_light_intermed_chain"/>
</dbReference>
<dbReference type="PANTHER" id="PTHR12688">
    <property type="entry name" value="DYNEIN LIGHT INTERMEDIATE CHAIN"/>
    <property type="match status" value="1"/>
</dbReference>
<dbReference type="PANTHER" id="PTHR12688:SF0">
    <property type="entry name" value="DYNEIN LIGHT INTERMEDIATE CHAIN"/>
    <property type="match status" value="1"/>
</dbReference>
<proteinExistence type="evidence at protein level"/>
<name>DIL1_SCHPO</name>
<organism>
    <name type="scientific">Schizosaccharomyces pombe (strain 972 / ATCC 24843)</name>
    <name type="common">Fission yeast</name>
    <dbReference type="NCBI Taxonomy" id="284812"/>
    <lineage>
        <taxon>Eukaryota</taxon>
        <taxon>Fungi</taxon>
        <taxon>Dikarya</taxon>
        <taxon>Ascomycota</taxon>
        <taxon>Taphrinomycotina</taxon>
        <taxon>Schizosaccharomycetes</taxon>
        <taxon>Schizosaccharomycetales</taxon>
        <taxon>Schizosaccharomycetaceae</taxon>
        <taxon>Schizosaccharomyces</taxon>
    </lineage>
</organism>
<gene>
    <name type="primary">dil1</name>
    <name type="ORF">SPAC458.04c</name>
</gene>
<protein>
    <recommendedName>
        <fullName>Dynein intermediate light chain dil1</fullName>
    </recommendedName>
</protein>
<evidence type="ECO:0000250" key="1"/>
<evidence type="ECO:0000269" key="2">
    <source>
    </source>
</evidence>
<evidence type="ECO:0000269" key="3">
    <source>
    </source>
</evidence>
<evidence type="ECO:0000305" key="4"/>